<keyword id="KW-0068">Autocatalytic cleavage</keyword>
<keyword id="KW-0963">Cytoplasm</keyword>
<keyword id="KW-0210">Decarboxylase</keyword>
<keyword id="KW-0456">Lyase</keyword>
<keyword id="KW-0566">Pantothenate biosynthesis</keyword>
<keyword id="KW-0670">Pyruvate</keyword>
<keyword id="KW-1185">Reference proteome</keyword>
<keyword id="KW-0704">Schiff base</keyword>
<keyword id="KW-0865">Zymogen</keyword>
<sequence length="136" mass="14147">MLRTILGSKIHRATVTQADLDYVGSVTIDADLVHAAGLIEGEKVAIVDITNGARLETYVIVGDAGTGNICINGAAAHLINPGDLVIIMSYLQATDAEAKAYEPKIVHVDADNRIVALGNDLAEALPGSGLLTSRSI</sequence>
<gene>
    <name evidence="1" type="primary">panD</name>
    <name type="ordered locus">Cgl0135</name>
    <name type="ordered locus">cg0172</name>
</gene>
<name>PAND_CORGL</name>
<feature type="chain" id="PRO_0000023067" description="Aspartate 1-decarboxylase beta chain" evidence="1">
    <location>
        <begin position="1"/>
        <end position="24"/>
    </location>
</feature>
<feature type="chain" id="PRO_0000023068" description="Aspartate 1-decarboxylase alpha chain" evidence="1">
    <location>
        <begin position="25"/>
        <end position="136"/>
    </location>
</feature>
<feature type="active site" description="Schiff-base intermediate with substrate; via pyruvic acid" evidence="1">
    <location>
        <position position="25"/>
    </location>
</feature>
<feature type="active site" description="Proton donor" evidence="1">
    <location>
        <position position="58"/>
    </location>
</feature>
<feature type="binding site" evidence="1">
    <location>
        <position position="57"/>
    </location>
    <ligand>
        <name>substrate</name>
    </ligand>
</feature>
<feature type="binding site" evidence="1">
    <location>
        <begin position="73"/>
        <end position="75"/>
    </location>
    <ligand>
        <name>substrate</name>
    </ligand>
</feature>
<feature type="modified residue" description="Pyruvic acid (Ser)" evidence="1">
    <location>
        <position position="25"/>
    </location>
</feature>
<accession>Q9X4N0</accession>
<protein>
    <recommendedName>
        <fullName evidence="1">Aspartate 1-decarboxylase</fullName>
        <ecNumber evidence="1">4.1.1.11</ecNumber>
    </recommendedName>
    <alternativeName>
        <fullName evidence="1">Aspartate alpha-decarboxylase</fullName>
    </alternativeName>
    <component>
        <recommendedName>
            <fullName evidence="1">Aspartate 1-decarboxylase beta chain</fullName>
        </recommendedName>
    </component>
    <component>
        <recommendedName>
            <fullName evidence="1">Aspartate 1-decarboxylase alpha chain</fullName>
        </recommendedName>
    </component>
</protein>
<proteinExistence type="evidence at protein level"/>
<organism>
    <name type="scientific">Corynebacterium glutamicum (strain ATCC 13032 / DSM 20300 / JCM 1318 / BCRC 11384 / CCUG 27702 / LMG 3730 / NBRC 12168 / NCIMB 10025 / NRRL B-2784 / 534)</name>
    <dbReference type="NCBI Taxonomy" id="196627"/>
    <lineage>
        <taxon>Bacteria</taxon>
        <taxon>Bacillati</taxon>
        <taxon>Actinomycetota</taxon>
        <taxon>Actinomycetes</taxon>
        <taxon>Mycobacteriales</taxon>
        <taxon>Corynebacteriaceae</taxon>
        <taxon>Corynebacterium</taxon>
    </lineage>
</organism>
<reference key="1">
    <citation type="journal article" date="1999" name="Appl. Environ. Microbiol.">
        <title>Expression of the Corynebacterium glutamicum panD gene encoding L-aspartate-alpha-decarboxylase leads to pantothenate overproduction in Escherichia coli.</title>
        <authorList>
            <person name="Dusch N."/>
            <person name="Puehler A."/>
            <person name="Kalinowski J."/>
        </authorList>
    </citation>
    <scope>NUCLEOTIDE SEQUENCE [GENOMIC DNA]</scope>
    <scope>CHARACTERIZATION</scope>
    <source>
        <strain>ATCC 13032 / DSM 20300 / JCM 1318 / BCRC 11384 / CCUG 27702 / LMG 3730 / NBRC 12168 / NCIMB 10025 / NRRL B-2784 / 534</strain>
    </source>
</reference>
<reference key="2">
    <citation type="journal article" date="2003" name="Appl. Microbiol. Biotechnol.">
        <title>The Corynebacterium glutamicum genome: features and impacts on biotechnological processes.</title>
        <authorList>
            <person name="Ikeda M."/>
            <person name="Nakagawa S."/>
        </authorList>
    </citation>
    <scope>NUCLEOTIDE SEQUENCE [LARGE SCALE GENOMIC DNA]</scope>
    <source>
        <strain>ATCC 13032 / DSM 20300 / JCM 1318 / BCRC 11384 / CCUG 27702 / LMG 3730 / NBRC 12168 / NCIMB 10025 / NRRL B-2784 / 534</strain>
    </source>
</reference>
<reference key="3">
    <citation type="journal article" date="2003" name="J. Biotechnol.">
        <title>The complete Corynebacterium glutamicum ATCC 13032 genome sequence and its impact on the production of L-aspartate-derived amino acids and vitamins.</title>
        <authorList>
            <person name="Kalinowski J."/>
            <person name="Bathe B."/>
            <person name="Bartels D."/>
            <person name="Bischoff N."/>
            <person name="Bott M."/>
            <person name="Burkovski A."/>
            <person name="Dusch N."/>
            <person name="Eggeling L."/>
            <person name="Eikmanns B.J."/>
            <person name="Gaigalat L."/>
            <person name="Goesmann A."/>
            <person name="Hartmann M."/>
            <person name="Huthmacher K."/>
            <person name="Kraemer R."/>
            <person name="Linke B."/>
            <person name="McHardy A.C."/>
            <person name="Meyer F."/>
            <person name="Moeckel B."/>
            <person name="Pfefferle W."/>
            <person name="Puehler A."/>
            <person name="Rey D.A."/>
            <person name="Rueckert C."/>
            <person name="Rupp O."/>
            <person name="Sahm H."/>
            <person name="Wendisch V.F."/>
            <person name="Wiegraebe I."/>
            <person name="Tauch A."/>
        </authorList>
    </citation>
    <scope>NUCLEOTIDE SEQUENCE [LARGE SCALE GENOMIC DNA]</scope>
    <source>
        <strain>ATCC 13032 / DSM 20300 / JCM 1318 / BCRC 11384 / CCUG 27702 / LMG 3730 / NBRC 12168 / NCIMB 10025 / NRRL B-2784 / 534</strain>
    </source>
</reference>
<comment type="function">
    <text evidence="1">Catalyzes the pyruvoyl-dependent decarboxylation of aspartate to produce beta-alanine.</text>
</comment>
<comment type="catalytic activity">
    <reaction evidence="1">
        <text>L-aspartate + H(+) = beta-alanine + CO2</text>
        <dbReference type="Rhea" id="RHEA:19497"/>
        <dbReference type="ChEBI" id="CHEBI:15378"/>
        <dbReference type="ChEBI" id="CHEBI:16526"/>
        <dbReference type="ChEBI" id="CHEBI:29991"/>
        <dbReference type="ChEBI" id="CHEBI:57966"/>
        <dbReference type="EC" id="4.1.1.11"/>
    </reaction>
</comment>
<comment type="cofactor">
    <cofactor evidence="1">
        <name>pyruvate</name>
        <dbReference type="ChEBI" id="CHEBI:15361"/>
    </cofactor>
    <text evidence="1">Binds 1 pyruvoyl group covalently per subunit.</text>
</comment>
<comment type="pathway">
    <text evidence="1">Cofactor biosynthesis; (R)-pantothenate biosynthesis; beta-alanine from L-aspartate: step 1/1.</text>
</comment>
<comment type="subunit">
    <text evidence="1">Heterooctamer of four alpha and four beta subunits.</text>
</comment>
<comment type="subcellular location">
    <subcellularLocation>
        <location evidence="1">Cytoplasm</location>
    </subcellularLocation>
</comment>
<comment type="PTM">
    <text evidence="1">Is synthesized initially as an inactive proenzyme, which is activated by self-cleavage at a specific serine bond to produce a beta-subunit with a hydroxyl group at its C-terminus and an alpha-subunit with a pyruvoyl group at its N-terminus.</text>
</comment>
<comment type="similarity">
    <text evidence="1">Belongs to the PanD family.</text>
</comment>
<evidence type="ECO:0000255" key="1">
    <source>
        <dbReference type="HAMAP-Rule" id="MF_00446"/>
    </source>
</evidence>
<dbReference type="EC" id="4.1.1.11" evidence="1"/>
<dbReference type="EMBL" id="AF116184">
    <property type="protein sequence ID" value="AAD28430.1"/>
    <property type="molecule type" value="Genomic_DNA"/>
</dbReference>
<dbReference type="EMBL" id="BA000036">
    <property type="protein sequence ID" value="BAB97528.1"/>
    <property type="molecule type" value="Genomic_DNA"/>
</dbReference>
<dbReference type="EMBL" id="BX927148">
    <property type="protein sequence ID" value="CAF18702.1"/>
    <property type="molecule type" value="Genomic_DNA"/>
</dbReference>
<dbReference type="RefSeq" id="NP_599388.1">
    <property type="nucleotide sequence ID" value="NC_003450.3"/>
</dbReference>
<dbReference type="RefSeq" id="WP_003857183.1">
    <property type="nucleotide sequence ID" value="NC_006958.1"/>
</dbReference>
<dbReference type="SMR" id="Q9X4N0"/>
<dbReference type="STRING" id="196627.cg0172"/>
<dbReference type="GeneID" id="1021120"/>
<dbReference type="KEGG" id="cgb:cg0172"/>
<dbReference type="KEGG" id="cgl:Cgl0135"/>
<dbReference type="PATRIC" id="fig|196627.13.peg.139"/>
<dbReference type="eggNOG" id="COG0853">
    <property type="taxonomic scope" value="Bacteria"/>
</dbReference>
<dbReference type="HOGENOM" id="CLU_115305_2_0_11"/>
<dbReference type="OrthoDB" id="9803983at2"/>
<dbReference type="BioCyc" id="CORYNE:G18NG-9684-MONOMER"/>
<dbReference type="BRENDA" id="4.1.1.11">
    <property type="organism ID" value="960"/>
</dbReference>
<dbReference type="UniPathway" id="UPA00028">
    <property type="reaction ID" value="UER00002"/>
</dbReference>
<dbReference type="Proteomes" id="UP000000582">
    <property type="component" value="Chromosome"/>
</dbReference>
<dbReference type="Proteomes" id="UP000001009">
    <property type="component" value="Chromosome"/>
</dbReference>
<dbReference type="GO" id="GO:0005829">
    <property type="term" value="C:cytosol"/>
    <property type="evidence" value="ECO:0007669"/>
    <property type="project" value="TreeGrafter"/>
</dbReference>
<dbReference type="GO" id="GO:0004068">
    <property type="term" value="F:aspartate 1-decarboxylase activity"/>
    <property type="evidence" value="ECO:0007669"/>
    <property type="project" value="UniProtKB-UniRule"/>
</dbReference>
<dbReference type="GO" id="GO:0006523">
    <property type="term" value="P:alanine biosynthetic process"/>
    <property type="evidence" value="ECO:0007669"/>
    <property type="project" value="InterPro"/>
</dbReference>
<dbReference type="GO" id="GO:0015940">
    <property type="term" value="P:pantothenate biosynthetic process"/>
    <property type="evidence" value="ECO:0007669"/>
    <property type="project" value="UniProtKB-UniRule"/>
</dbReference>
<dbReference type="CDD" id="cd06919">
    <property type="entry name" value="Asp_decarbox"/>
    <property type="match status" value="1"/>
</dbReference>
<dbReference type="Gene3D" id="2.40.40.20">
    <property type="match status" value="1"/>
</dbReference>
<dbReference type="HAMAP" id="MF_00446">
    <property type="entry name" value="PanD"/>
    <property type="match status" value="1"/>
</dbReference>
<dbReference type="InterPro" id="IPR009010">
    <property type="entry name" value="Asp_de-COase-like_dom_sf"/>
</dbReference>
<dbReference type="InterPro" id="IPR003190">
    <property type="entry name" value="Asp_decarbox"/>
</dbReference>
<dbReference type="NCBIfam" id="TIGR00223">
    <property type="entry name" value="panD"/>
    <property type="match status" value="1"/>
</dbReference>
<dbReference type="PANTHER" id="PTHR21012">
    <property type="entry name" value="ASPARTATE 1-DECARBOXYLASE"/>
    <property type="match status" value="1"/>
</dbReference>
<dbReference type="PANTHER" id="PTHR21012:SF0">
    <property type="entry name" value="ASPARTATE 1-DECARBOXYLASE"/>
    <property type="match status" value="1"/>
</dbReference>
<dbReference type="Pfam" id="PF02261">
    <property type="entry name" value="Asp_decarbox"/>
    <property type="match status" value="1"/>
</dbReference>
<dbReference type="PIRSF" id="PIRSF006246">
    <property type="entry name" value="Asp_decarbox"/>
    <property type="match status" value="1"/>
</dbReference>
<dbReference type="SUPFAM" id="SSF50692">
    <property type="entry name" value="ADC-like"/>
    <property type="match status" value="1"/>
</dbReference>